<gene>
    <name type="primary">ZP2</name>
    <name type="synonym">ZPA</name>
</gene>
<evidence type="ECO:0000250" key="1"/>
<evidence type="ECO:0000250" key="2">
    <source>
        <dbReference type="UniProtKB" id="P20239"/>
    </source>
</evidence>
<evidence type="ECO:0000250" key="3">
    <source>
        <dbReference type="UniProtKB" id="Q05996"/>
    </source>
</evidence>
<evidence type="ECO:0000255" key="4"/>
<evidence type="ECO:0000255" key="5">
    <source>
        <dbReference type="PROSITE-ProRule" id="PRU00375"/>
    </source>
</evidence>
<evidence type="ECO:0000255" key="6">
    <source>
        <dbReference type="PROSITE-ProRule" id="PRU00498"/>
    </source>
</evidence>
<evidence type="ECO:0000305" key="7"/>
<reference key="1">
    <citation type="journal article" date="1994" name="DNA Seq.">
        <title>Cloning and characterization of zona pellucida genes and cDNAs from a variety of mammalian species: the ZPA, ZPB and ZPC gene families.</title>
        <authorList>
            <person name="Harris J.D."/>
            <person name="Hibler D.W."/>
            <person name="Fontenot G.K."/>
            <person name="Hsu K.T."/>
            <person name="Yurewicz E.C."/>
            <person name="Sacco A.G."/>
        </authorList>
    </citation>
    <scope>NUCLEOTIDE SEQUENCE [MRNA]</scope>
    <source>
        <tissue>Ovary</tissue>
    </source>
</reference>
<reference key="2">
    <citation type="submission" date="1995-01" db="EMBL/GenBank/DDBJ databases">
        <authorList>
            <person name="Okazaki Y."/>
            <person name="Isojima S."/>
            <person name="Sugimoto M."/>
        </authorList>
    </citation>
    <scope>NUCLEOTIDE SEQUENCE [MRNA]</scope>
    <source>
        <tissue>Ovary</tissue>
    </source>
</reference>
<comment type="function">
    <text evidence="2">Component of the zona pellucida, an extracellular matrix surrounding oocytes which mediates sperm binding, induction of the acrosome reaction and prevents post-fertilization polyspermy. The zona pellucida is composed of 3 to 4 glycoproteins, ZP1, ZP2, ZP3, and ZP4. ZP2 may act as a secondary sperm receptor.</text>
</comment>
<comment type="subunit">
    <text evidence="2 3">Can form homopolymers that assemble into long fibers (in vitro). Polymers of ZP2 and ZP3 organized into long filaments cross-linked by ZP1 homodimers. Interacts with ZP3.</text>
</comment>
<comment type="subcellular location">
    <molecule>Processed zona pellucida sperm-binding protein 2</molecule>
    <subcellularLocation>
        <location evidence="2">Zona pellucida</location>
    </subcellularLocation>
</comment>
<comment type="subcellular location">
    <subcellularLocation>
        <location evidence="2">Cell membrane</location>
        <topology evidence="4">Single-pass type I membrane protein</topology>
    </subcellularLocation>
</comment>
<comment type="domain">
    <text evidence="2">The ZP domain is involved in the polymerization of the ZP proteins to form the zona pellucida.</text>
</comment>
<comment type="PTM">
    <text evidence="2">Proteolytically cleaved before the transmembrane segment to yield the secreted ectodomain incorporated in the zona pellucida.</text>
</comment>
<comment type="PTM">
    <text evidence="2">Proteolytically cleaved in the N-terminal part by the metalloendopeptidase ASTL exocytosed from cortical granules after fertilization, yielding a N-terminal peptide of about 30 kDa which remains covalently attached to the C-terminal peptide via disulfide bond(s). This cleavage may play an important role in the post-fertilization block to polyspermy. Additional proteolytically cleavage of the N-terminal peptide of 30 kDa occurs in one-cell and two-cell embryos.</text>
</comment>
<comment type="PTM">
    <text evidence="2">N-glycosylated.</text>
</comment>
<comment type="PTM">
    <text evidence="2">O-glycosylated; contains sulfate-substituted glycans.</text>
</comment>
<comment type="similarity">
    <text evidence="7">Belongs to the ZP domain family. ZPA subfamily.</text>
</comment>
<organism>
    <name type="scientific">Canis lupus familiaris</name>
    <name type="common">Dog</name>
    <name type="synonym">Canis familiaris</name>
    <dbReference type="NCBI Taxonomy" id="9615"/>
    <lineage>
        <taxon>Eukaryota</taxon>
        <taxon>Metazoa</taxon>
        <taxon>Chordata</taxon>
        <taxon>Craniata</taxon>
        <taxon>Vertebrata</taxon>
        <taxon>Euteleostomi</taxon>
        <taxon>Mammalia</taxon>
        <taxon>Eutheria</taxon>
        <taxon>Laurasiatheria</taxon>
        <taxon>Carnivora</taxon>
        <taxon>Caniformia</taxon>
        <taxon>Canidae</taxon>
        <taxon>Canis</taxon>
    </lineage>
</organism>
<accession>P47983</accession>
<protein>
    <recommendedName>
        <fullName>Zona pellucida sperm-binding protein 2</fullName>
    </recommendedName>
    <alternativeName>
        <fullName>Zona pellucida glycoprotein 2</fullName>
        <shortName>Zp-2</shortName>
    </alternativeName>
    <alternativeName>
        <fullName>Zona pellucida protein A</fullName>
    </alternativeName>
    <component>
        <recommendedName>
            <fullName>Processed zona pellucida sperm-binding protein 2</fullName>
        </recommendedName>
    </component>
</protein>
<keyword id="KW-1003">Cell membrane</keyword>
<keyword id="KW-0165">Cleavage on pair of basic residues</keyword>
<keyword id="KW-1015">Disulfide bond</keyword>
<keyword id="KW-0272">Extracellular matrix</keyword>
<keyword id="KW-0278">Fertilization</keyword>
<keyword id="KW-0325">Glycoprotein</keyword>
<keyword id="KW-0472">Membrane</keyword>
<keyword id="KW-0675">Receptor</keyword>
<keyword id="KW-1185">Reference proteome</keyword>
<keyword id="KW-0964">Secreted</keyword>
<keyword id="KW-0732">Signal</keyword>
<keyword id="KW-0812">Transmembrane</keyword>
<keyword id="KW-1133">Transmembrane helix</keyword>
<proteinExistence type="evidence at transcript level"/>
<sequence length="715" mass="79939">MACKQKGDSGSPSSRFSADWSTYRSLSLFFILVTSVNSVGVMQLVNPIFPGTVICHENKMTVEFPRDLGTKKWHASVVDPFSFELLNCTSILDPEKLTLKAPYETCSRRVLGQHQMAIRLTDNNAASRHKAFMYQISCPVMQTEETHEHAGSTICTKDSMSFTFNIIPGMADENTNPSGGKWMMEVDDAKAQNLTLREALMQGYNFLFDSHRLSVQVSFNATGVTHYMQGNSHLYTVPLKLIHTSPGQKIILTTRVLCMSDPVTCNATHMTLTIPEFPGKLQSVRFENTNFRVSQLHNHGIDKEELNGLRLHFSKSLLKMNSSEKCLLYQFYLASLKLTFAFERDTVSTVVYPECVCEPPVTIVTGDLCTQDGFMDVKVYSHQTKPALNLDTLRVGDSSCQPTFKAPSQGLTLFHIPLNGCGTRLKFKGDTVIYENEIHALWTDLPPSTISRDSEFRMTVKCHYSRDDLLINTNVQSLPPPVASVRPGPLALILQTYPDKSYLRPYGDKEYPVVRYLRQPIYLEVKVLNRADPNIKLVLDDCWATPTMDPASLPQWNIVMDGCEYNLDNYRTTFHPVGSSVTYPTHYQRFDVKTFAFISEAQVLSSLVYFHCTALICNRLSPDSPLCSVTCPVSSRHRRATGSTEEEKMIVSLPGPILLLADSSSLRDGVDSKGHRAAGYVAFKTVVAVAALAGLVAALGLIIYLRKKRTMVLNH</sequence>
<dbReference type="EMBL" id="U05779">
    <property type="protein sequence ID" value="AAA74386.1"/>
    <property type="molecule type" value="mRNA"/>
</dbReference>
<dbReference type="EMBL" id="D45069">
    <property type="protein sequence ID" value="BAA08097.1"/>
    <property type="molecule type" value="mRNA"/>
</dbReference>
<dbReference type="PIR" id="S70397">
    <property type="entry name" value="S70397"/>
</dbReference>
<dbReference type="RefSeq" id="NP_001003304.1">
    <property type="nucleotide sequence ID" value="NM_001003304.1"/>
</dbReference>
<dbReference type="SMR" id="P47983"/>
<dbReference type="FunCoup" id="P47983">
    <property type="interactions" value="29"/>
</dbReference>
<dbReference type="STRING" id="9615.ENSCAFP00000026286"/>
<dbReference type="GlyCosmos" id="P47983">
    <property type="glycosylation" value="6 sites, No reported glycans"/>
</dbReference>
<dbReference type="PaxDb" id="9612-ENSCAFP00000026286"/>
<dbReference type="GeneID" id="403988"/>
<dbReference type="KEGG" id="cfa:403988"/>
<dbReference type="CTD" id="7783"/>
<dbReference type="eggNOG" id="ENOG502QPI2">
    <property type="taxonomic scope" value="Eukaryota"/>
</dbReference>
<dbReference type="InParanoid" id="P47983"/>
<dbReference type="OrthoDB" id="9903747at2759"/>
<dbReference type="Proteomes" id="UP000002254">
    <property type="component" value="Unplaced"/>
</dbReference>
<dbReference type="Proteomes" id="UP000694429">
    <property type="component" value="Unplaced"/>
</dbReference>
<dbReference type="Proteomes" id="UP000694542">
    <property type="component" value="Unplaced"/>
</dbReference>
<dbReference type="Proteomes" id="UP000805418">
    <property type="component" value="Unplaced"/>
</dbReference>
<dbReference type="GO" id="GO:0062023">
    <property type="term" value="C:collagen-containing extracellular matrix"/>
    <property type="evidence" value="ECO:0000250"/>
    <property type="project" value="UniProtKB"/>
</dbReference>
<dbReference type="GO" id="GO:0035805">
    <property type="term" value="C:egg coat"/>
    <property type="evidence" value="ECO:0000250"/>
    <property type="project" value="UniProtKB"/>
</dbReference>
<dbReference type="GO" id="GO:0005783">
    <property type="term" value="C:endoplasmic reticulum"/>
    <property type="evidence" value="ECO:0000250"/>
    <property type="project" value="UniProtKB"/>
</dbReference>
<dbReference type="GO" id="GO:0005576">
    <property type="term" value="C:extracellular region"/>
    <property type="evidence" value="ECO:0007669"/>
    <property type="project" value="UniProtKB-KW"/>
</dbReference>
<dbReference type="GO" id="GO:0016234">
    <property type="term" value="C:inclusion body"/>
    <property type="evidence" value="ECO:0000314"/>
    <property type="project" value="UniProtKB"/>
</dbReference>
<dbReference type="GO" id="GO:0005771">
    <property type="term" value="C:multivesicular body"/>
    <property type="evidence" value="ECO:0000250"/>
    <property type="project" value="UniProtKB"/>
</dbReference>
<dbReference type="GO" id="GO:0005886">
    <property type="term" value="C:plasma membrane"/>
    <property type="evidence" value="ECO:0000250"/>
    <property type="project" value="UniProtKB"/>
</dbReference>
<dbReference type="GO" id="GO:0032190">
    <property type="term" value="F:acrosin binding"/>
    <property type="evidence" value="ECO:0000318"/>
    <property type="project" value="GO_Central"/>
</dbReference>
<dbReference type="GO" id="GO:0035804">
    <property type="term" value="F:structural constituent of egg coat"/>
    <property type="evidence" value="ECO:0000250"/>
    <property type="project" value="UniProtKB"/>
</dbReference>
<dbReference type="GO" id="GO:0007339">
    <property type="term" value="P:binding of sperm to zona pellucida"/>
    <property type="evidence" value="ECO:0000250"/>
    <property type="project" value="UniProtKB"/>
</dbReference>
<dbReference type="GO" id="GO:0002455">
    <property type="term" value="P:humoral immune response mediated by circulating immunoglobulin"/>
    <property type="evidence" value="ECO:0000314"/>
    <property type="project" value="UniProtKB"/>
</dbReference>
<dbReference type="GO" id="GO:0060468">
    <property type="term" value="P:prevention of polyspermy"/>
    <property type="evidence" value="ECO:0000250"/>
    <property type="project" value="UniProtKB"/>
</dbReference>
<dbReference type="FunFam" id="2.60.40.3210:FF:000006">
    <property type="entry name" value="Zona pellucida sperm-binding protein 2"/>
    <property type="match status" value="1"/>
</dbReference>
<dbReference type="FunFam" id="2.60.40.4100:FF:000004">
    <property type="entry name" value="Zona pellucida sperm-binding protein 2"/>
    <property type="match status" value="1"/>
</dbReference>
<dbReference type="Gene3D" id="2.60.40.4100">
    <property type="entry name" value="Zona pellucida, ZP-C domain"/>
    <property type="match status" value="1"/>
</dbReference>
<dbReference type="Gene3D" id="2.60.40.3210">
    <property type="entry name" value="Zona pellucida, ZP-N domain"/>
    <property type="match status" value="1"/>
</dbReference>
<dbReference type="InterPro" id="IPR051148">
    <property type="entry name" value="Zona_Pellucida_Domain_gp"/>
</dbReference>
<dbReference type="InterPro" id="IPR055355">
    <property type="entry name" value="ZP-C"/>
</dbReference>
<dbReference type="InterPro" id="IPR042235">
    <property type="entry name" value="ZP-C_dom"/>
</dbReference>
<dbReference type="InterPro" id="IPR055356">
    <property type="entry name" value="ZP-N"/>
</dbReference>
<dbReference type="InterPro" id="IPR048290">
    <property type="entry name" value="ZP_chr"/>
</dbReference>
<dbReference type="InterPro" id="IPR001507">
    <property type="entry name" value="ZP_dom"/>
</dbReference>
<dbReference type="InterPro" id="IPR017977">
    <property type="entry name" value="ZP_dom_CS"/>
</dbReference>
<dbReference type="PANTHER" id="PTHR23343">
    <property type="entry name" value="ZONA PELLUCIDA SPERM-BINDING PROTEIN"/>
    <property type="match status" value="1"/>
</dbReference>
<dbReference type="PANTHER" id="PTHR23343:SF4">
    <property type="entry name" value="ZONA PELLUCIDA SPERM-BINDING PROTEIN 2"/>
    <property type="match status" value="1"/>
</dbReference>
<dbReference type="Pfam" id="PF23736">
    <property type="entry name" value="Ig_ZP2"/>
    <property type="match status" value="1"/>
</dbReference>
<dbReference type="Pfam" id="PF23740">
    <property type="entry name" value="Ig_ZP2_3rd"/>
    <property type="match status" value="1"/>
</dbReference>
<dbReference type="Pfam" id="PF23738">
    <property type="entry name" value="Ig_ZP2_N"/>
    <property type="match status" value="1"/>
</dbReference>
<dbReference type="Pfam" id="PF00100">
    <property type="entry name" value="Zona_pellucida"/>
    <property type="match status" value="1"/>
</dbReference>
<dbReference type="Pfam" id="PF23344">
    <property type="entry name" value="ZP-N"/>
    <property type="match status" value="1"/>
</dbReference>
<dbReference type="PRINTS" id="PR00023">
    <property type="entry name" value="ZPELLUCIDA"/>
</dbReference>
<dbReference type="SMART" id="SM00241">
    <property type="entry name" value="ZP"/>
    <property type="match status" value="1"/>
</dbReference>
<dbReference type="PROSITE" id="PS00682">
    <property type="entry name" value="ZP_1"/>
    <property type="match status" value="1"/>
</dbReference>
<dbReference type="PROSITE" id="PS51034">
    <property type="entry name" value="ZP_2"/>
    <property type="match status" value="1"/>
</dbReference>
<name>ZP2_CANLF</name>
<feature type="signal peptide" evidence="2">
    <location>
        <begin position="1"/>
        <end position="38"/>
    </location>
</feature>
<feature type="chain" id="PRO_0000041685" description="Zona pellucida sperm-binding protein 2">
    <location>
        <begin position="39"/>
        <end position="637"/>
    </location>
</feature>
<feature type="chain" id="PRO_0000304557" description="Processed zona pellucida sperm-binding protein 2">
    <location>
        <begin position="39"/>
        <end status="unknown"/>
    </location>
</feature>
<feature type="propeptide" id="PRO_0000041686" description="Removed in mature form" evidence="2">
    <location>
        <begin position="638"/>
        <end position="715"/>
    </location>
</feature>
<feature type="topological domain" description="Extracellular" evidence="4">
    <location>
        <begin position="39"/>
        <end position="684"/>
    </location>
</feature>
<feature type="transmembrane region" description="Helical" evidence="4">
    <location>
        <begin position="685"/>
        <end position="705"/>
    </location>
</feature>
<feature type="topological domain" description="Cytoplasmic" evidence="4">
    <location>
        <begin position="706"/>
        <end position="715"/>
    </location>
</feature>
<feature type="domain" description="ZP" evidence="5">
    <location>
        <begin position="368"/>
        <end position="634"/>
    </location>
</feature>
<feature type="region of interest" description="Disordered" evidence="2">
    <location>
        <begin position="466"/>
        <end position="488"/>
    </location>
</feature>
<feature type="site" description="Cleavage; by ASTL" evidence="2">
    <location>
        <begin position="171"/>
        <end position="172"/>
    </location>
</feature>
<feature type="site" description="Cleavage" evidence="2">
    <location>
        <begin position="637"/>
        <end position="638"/>
    </location>
</feature>
<feature type="glycosylation site" description="N-linked (GlcNAc...) asparagine" evidence="6">
    <location>
        <position position="87"/>
    </location>
</feature>
<feature type="glycosylation site" description="N-linked (GlcNAc...) asparagine" evidence="6">
    <location>
        <position position="193"/>
    </location>
</feature>
<feature type="glycosylation site" description="N-linked (GlcNAc...) asparagine" evidence="6">
    <location>
        <position position="220"/>
    </location>
</feature>
<feature type="glycosylation site" description="N-linked (GlcNAc...) asparagine" evidence="6">
    <location>
        <position position="266"/>
    </location>
</feature>
<feature type="glycosylation site" description="N-linked (GlcNAc...) asparagine" evidence="6">
    <location>
        <position position="321"/>
    </location>
</feature>
<feature type="glycosylation site" description="O-linked (GalNAc...) threonine" evidence="1">
    <location>
        <position position="459"/>
    </location>
</feature>
<feature type="disulfide bond" evidence="2">
    <location>
        <begin position="55"/>
        <end position="138"/>
    </location>
</feature>
<feature type="disulfide bond" evidence="2">
    <location>
        <begin position="88"/>
        <end position="106"/>
    </location>
</feature>
<feature type="disulfide bond" evidence="2">
    <location>
        <begin position="369"/>
        <end position="462"/>
    </location>
</feature>
<feature type="disulfide bond" evidence="2">
    <location>
        <begin position="400"/>
        <end position="421"/>
    </location>
</feature>
<feature type="disulfide bond" evidence="2">
    <location>
        <begin position="542"/>
        <end position="612"/>
    </location>
</feature>
<feature type="disulfide bond" evidence="2">
    <location>
        <begin position="563"/>
        <end position="631"/>
    </location>
</feature>
<feature type="disulfide bond" evidence="2">
    <location>
        <begin position="617"/>
        <end position="627"/>
    </location>
</feature>
<feature type="sequence conflict" description="In Ref. 2; BAA08097." evidence="7" ref="2">
    <original>R</original>
    <variation>W</variation>
    <location>
        <position position="15"/>
    </location>
</feature>
<feature type="sequence conflict" description="In Ref. 2; BAA08097." evidence="7" ref="2">
    <original>R</original>
    <variation>A</variation>
    <location>
        <position position="292"/>
    </location>
</feature>
<feature type="sequence conflict" description="In Ref. 2; BAA08097." evidence="7" ref="2">
    <original>L</original>
    <variation>P</variation>
    <location>
        <position position="328"/>
    </location>
</feature>
<feature type="sequence conflict" description="In Ref. 2; BAA08097." evidence="7" ref="2">
    <original>S</original>
    <variation>A</variation>
    <location>
        <position position="599"/>
    </location>
</feature>